<gene>
    <name type="primary">ybjG</name>
    <name type="ordered locus">b0841</name>
    <name type="ordered locus">JW5112</name>
</gene>
<feature type="chain" id="PRO_0000168739" description="Putative undecaprenyl-diphosphatase YbjG">
    <location>
        <begin position="1"/>
        <end position="198"/>
    </location>
</feature>
<feature type="topological domain" description="Cytoplasmic" evidence="1">
    <location>
        <begin position="1"/>
        <end position="27"/>
    </location>
</feature>
<feature type="transmembrane region" description="Helical" evidence="1">
    <location>
        <begin position="28"/>
        <end position="48"/>
    </location>
</feature>
<feature type="topological domain" description="Periplasmic" evidence="1">
    <location>
        <begin position="49"/>
        <end position="57"/>
    </location>
</feature>
<feature type="transmembrane region" description="Helical" evidence="1">
    <location>
        <begin position="58"/>
        <end position="78"/>
    </location>
</feature>
<feature type="topological domain" description="Cytoplasmic" evidence="1">
    <location>
        <begin position="79"/>
        <end position="120"/>
    </location>
</feature>
<feature type="transmembrane region" description="Helical" evidence="1">
    <location>
        <begin position="121"/>
        <end position="143"/>
    </location>
</feature>
<feature type="topological domain" description="Periplasmic" evidence="1">
    <location>
        <begin position="144"/>
        <end position="149"/>
    </location>
</feature>
<feature type="transmembrane region" description="Helical" evidence="1">
    <location>
        <begin position="150"/>
        <end position="172"/>
    </location>
</feature>
<feature type="topological domain" description="Cytoplasmic" evidence="1">
    <location>
        <begin position="173"/>
        <end position="198"/>
    </location>
</feature>
<evidence type="ECO:0000255" key="1"/>
<evidence type="ECO:0000269" key="2">
    <source>
    </source>
</evidence>
<evidence type="ECO:0000305" key="3"/>
<name>YBJG_ECOLI</name>
<dbReference type="EC" id="3.6.1.27"/>
<dbReference type="EMBL" id="U00096">
    <property type="protein sequence ID" value="AAC73928.1"/>
    <property type="molecule type" value="Genomic_DNA"/>
</dbReference>
<dbReference type="EMBL" id="AP009048">
    <property type="protein sequence ID" value="BAA35544.2"/>
    <property type="molecule type" value="Genomic_DNA"/>
</dbReference>
<dbReference type="PIR" id="A64822">
    <property type="entry name" value="A64822"/>
</dbReference>
<dbReference type="RefSeq" id="NP_415362.1">
    <property type="nucleotide sequence ID" value="NC_000913.3"/>
</dbReference>
<dbReference type="RefSeq" id="WP_001295291.1">
    <property type="nucleotide sequence ID" value="NZ_SSZK01000002.1"/>
</dbReference>
<dbReference type="SMR" id="P75806"/>
<dbReference type="BioGRID" id="4262827">
    <property type="interactions" value="184"/>
</dbReference>
<dbReference type="FunCoup" id="P75806">
    <property type="interactions" value="300"/>
</dbReference>
<dbReference type="STRING" id="511145.b0841"/>
<dbReference type="PaxDb" id="511145-b0841"/>
<dbReference type="EnsemblBacteria" id="AAC73928">
    <property type="protein sequence ID" value="AAC73928"/>
    <property type="gene ID" value="b0841"/>
</dbReference>
<dbReference type="GeneID" id="945450"/>
<dbReference type="KEGG" id="ecj:JW5112"/>
<dbReference type="KEGG" id="eco:b0841"/>
<dbReference type="KEGG" id="ecoc:C3026_05260"/>
<dbReference type="PATRIC" id="fig|1411691.4.peg.1437"/>
<dbReference type="EchoBASE" id="EB3440"/>
<dbReference type="eggNOG" id="COG0671">
    <property type="taxonomic scope" value="Bacteria"/>
</dbReference>
<dbReference type="InParanoid" id="P75806"/>
<dbReference type="OMA" id="VYMGVHY"/>
<dbReference type="OrthoDB" id="9801622at2"/>
<dbReference type="PhylomeDB" id="P75806"/>
<dbReference type="BioCyc" id="EcoCyc:G6439-MONOMER"/>
<dbReference type="BioCyc" id="MetaCyc:G6439-MONOMER"/>
<dbReference type="PRO" id="PR:P75806"/>
<dbReference type="Proteomes" id="UP000000625">
    <property type="component" value="Chromosome"/>
</dbReference>
<dbReference type="GO" id="GO:0005886">
    <property type="term" value="C:plasma membrane"/>
    <property type="evidence" value="ECO:0000314"/>
    <property type="project" value="EcoCyc"/>
</dbReference>
<dbReference type="GO" id="GO:0050380">
    <property type="term" value="F:undecaprenyl-diphosphatase activity"/>
    <property type="evidence" value="ECO:0000314"/>
    <property type="project" value="EcoCyc"/>
</dbReference>
<dbReference type="GO" id="GO:0071555">
    <property type="term" value="P:cell wall organization"/>
    <property type="evidence" value="ECO:0007669"/>
    <property type="project" value="UniProtKB-KW"/>
</dbReference>
<dbReference type="GO" id="GO:0009252">
    <property type="term" value="P:peptidoglycan biosynthetic process"/>
    <property type="evidence" value="ECO:0007669"/>
    <property type="project" value="UniProtKB-KW"/>
</dbReference>
<dbReference type="GO" id="GO:0008360">
    <property type="term" value="P:regulation of cell shape"/>
    <property type="evidence" value="ECO:0007669"/>
    <property type="project" value="UniProtKB-KW"/>
</dbReference>
<dbReference type="GO" id="GO:0046677">
    <property type="term" value="P:response to antibiotic"/>
    <property type="evidence" value="ECO:0000315"/>
    <property type="project" value="EcoCyc"/>
</dbReference>
<dbReference type="CDD" id="cd03385">
    <property type="entry name" value="PAP2_BcrC_like"/>
    <property type="match status" value="1"/>
</dbReference>
<dbReference type="FunFam" id="1.20.144.10:FF:000004">
    <property type="entry name" value="Undecaprenyl pyrophosphate phosphatase"/>
    <property type="match status" value="1"/>
</dbReference>
<dbReference type="Gene3D" id="1.20.144.10">
    <property type="entry name" value="Phosphatidic acid phosphatase type 2/haloperoxidase"/>
    <property type="match status" value="1"/>
</dbReference>
<dbReference type="InterPro" id="IPR036938">
    <property type="entry name" value="P_Acid_Pase_2/haloperoxi_sf"/>
</dbReference>
<dbReference type="InterPro" id="IPR000326">
    <property type="entry name" value="P_Acid_Pase_2/haloperoxidase"/>
</dbReference>
<dbReference type="InterPro" id="IPR033879">
    <property type="entry name" value="UPP_Pase"/>
</dbReference>
<dbReference type="NCBIfam" id="NF008813">
    <property type="entry name" value="PRK11837.1"/>
    <property type="match status" value="1"/>
</dbReference>
<dbReference type="PANTHER" id="PTHR14969:SF13">
    <property type="entry name" value="AT30094P"/>
    <property type="match status" value="1"/>
</dbReference>
<dbReference type="PANTHER" id="PTHR14969">
    <property type="entry name" value="SPHINGOSINE-1-PHOSPHATE PHOSPHOHYDROLASE"/>
    <property type="match status" value="1"/>
</dbReference>
<dbReference type="Pfam" id="PF01569">
    <property type="entry name" value="PAP2"/>
    <property type="match status" value="1"/>
</dbReference>
<dbReference type="SMART" id="SM00014">
    <property type="entry name" value="acidPPc"/>
    <property type="match status" value="1"/>
</dbReference>
<dbReference type="SUPFAM" id="SSF48317">
    <property type="entry name" value="Acid phosphatase/Vanadium-dependent haloperoxidase"/>
    <property type="match status" value="1"/>
</dbReference>
<keyword id="KW-0046">Antibiotic resistance</keyword>
<keyword id="KW-0997">Cell inner membrane</keyword>
<keyword id="KW-1003">Cell membrane</keyword>
<keyword id="KW-0133">Cell shape</keyword>
<keyword id="KW-0961">Cell wall biogenesis/degradation</keyword>
<keyword id="KW-0378">Hydrolase</keyword>
<keyword id="KW-0472">Membrane</keyword>
<keyword id="KW-0573">Peptidoglycan synthesis</keyword>
<keyword id="KW-1185">Reference proteome</keyword>
<keyword id="KW-0812">Transmembrane</keyword>
<keyword id="KW-1133">Transmembrane helix</keyword>
<organism>
    <name type="scientific">Escherichia coli (strain K12)</name>
    <dbReference type="NCBI Taxonomy" id="83333"/>
    <lineage>
        <taxon>Bacteria</taxon>
        <taxon>Pseudomonadati</taxon>
        <taxon>Pseudomonadota</taxon>
        <taxon>Gammaproteobacteria</taxon>
        <taxon>Enterobacterales</taxon>
        <taxon>Enterobacteriaceae</taxon>
        <taxon>Escherichia</taxon>
    </lineage>
</organism>
<protein>
    <recommendedName>
        <fullName>Putative undecaprenyl-diphosphatase YbjG</fullName>
        <ecNumber>3.6.1.27</ecNumber>
    </recommendedName>
    <alternativeName>
        <fullName>Undecaprenyl pyrophosphate phosphatase</fullName>
    </alternativeName>
</protein>
<reference key="1">
    <citation type="journal article" date="1996" name="DNA Res.">
        <title>A 718-kb DNA sequence of the Escherichia coli K-12 genome corresponding to the 12.7-28.0 min region on the linkage map.</title>
        <authorList>
            <person name="Oshima T."/>
            <person name="Aiba H."/>
            <person name="Baba T."/>
            <person name="Fujita K."/>
            <person name="Hayashi K."/>
            <person name="Honjo A."/>
            <person name="Ikemoto K."/>
            <person name="Inada T."/>
            <person name="Itoh T."/>
            <person name="Kajihara M."/>
            <person name="Kanai K."/>
            <person name="Kashimoto K."/>
            <person name="Kimura S."/>
            <person name="Kitagawa M."/>
            <person name="Makino K."/>
            <person name="Masuda S."/>
            <person name="Miki T."/>
            <person name="Mizobuchi K."/>
            <person name="Mori H."/>
            <person name="Motomura K."/>
            <person name="Nakamura Y."/>
            <person name="Nashimoto H."/>
            <person name="Nishio Y."/>
            <person name="Saito N."/>
            <person name="Sampei G."/>
            <person name="Seki Y."/>
            <person name="Tagami H."/>
            <person name="Takemoto K."/>
            <person name="Wada C."/>
            <person name="Yamamoto Y."/>
            <person name="Yano M."/>
            <person name="Horiuchi T."/>
        </authorList>
    </citation>
    <scope>NUCLEOTIDE SEQUENCE [LARGE SCALE GENOMIC DNA]</scope>
    <source>
        <strain>K12 / W3110 / ATCC 27325 / DSM 5911</strain>
    </source>
</reference>
<reference key="2">
    <citation type="journal article" date="1997" name="Science">
        <title>The complete genome sequence of Escherichia coli K-12.</title>
        <authorList>
            <person name="Blattner F.R."/>
            <person name="Plunkett G. III"/>
            <person name="Bloch C.A."/>
            <person name="Perna N.T."/>
            <person name="Burland V."/>
            <person name="Riley M."/>
            <person name="Collado-Vides J."/>
            <person name="Glasner J.D."/>
            <person name="Rode C.K."/>
            <person name="Mayhew G.F."/>
            <person name="Gregor J."/>
            <person name="Davis N.W."/>
            <person name="Kirkpatrick H.A."/>
            <person name="Goeden M.A."/>
            <person name="Rose D.J."/>
            <person name="Mau B."/>
            <person name="Shao Y."/>
        </authorList>
    </citation>
    <scope>NUCLEOTIDE SEQUENCE [LARGE SCALE GENOMIC DNA]</scope>
    <source>
        <strain>K12 / MG1655 / ATCC 47076</strain>
    </source>
</reference>
<reference key="3">
    <citation type="journal article" date="2006" name="Mol. Syst. Biol.">
        <title>Highly accurate genome sequences of Escherichia coli K-12 strains MG1655 and W3110.</title>
        <authorList>
            <person name="Hayashi K."/>
            <person name="Morooka N."/>
            <person name="Yamamoto Y."/>
            <person name="Fujita K."/>
            <person name="Isono K."/>
            <person name="Choi S."/>
            <person name="Ohtsubo E."/>
            <person name="Baba T."/>
            <person name="Wanner B.L."/>
            <person name="Mori H."/>
            <person name="Horiuchi T."/>
        </authorList>
    </citation>
    <scope>NUCLEOTIDE SEQUENCE [LARGE SCALE GENOMIC DNA]</scope>
    <source>
        <strain>K12 / W3110 / ATCC 27325 / DSM 5911</strain>
    </source>
</reference>
<reference key="4">
    <citation type="journal article" date="2005" name="J. Biol. Chem.">
        <title>Identification of multiple genes encoding membrane proteins with undecaprenyl pyrophosphate phosphatase (UppP) activity in Escherichia coli.</title>
        <authorList>
            <person name="El Ghachi M."/>
            <person name="Derbise A."/>
            <person name="Bouhss A."/>
            <person name="Mengin-Lecreulx D."/>
        </authorList>
    </citation>
    <scope>FUNCTION</scope>
</reference>
<reference key="5">
    <citation type="journal article" date="2005" name="Science">
        <title>Global topology analysis of the Escherichia coli inner membrane proteome.</title>
        <authorList>
            <person name="Daley D.O."/>
            <person name="Rapp M."/>
            <person name="Granseth E."/>
            <person name="Melen K."/>
            <person name="Drew D."/>
            <person name="von Heijne G."/>
        </authorList>
    </citation>
    <scope>TOPOLOGY [LARGE SCALE ANALYSIS]</scope>
    <source>
        <strain>K12 / MG1655 / ATCC 47076</strain>
    </source>
</reference>
<proteinExistence type="evidence at protein level"/>
<comment type="function">
    <text evidence="2">Overexpression leads to increased undecaprenyl diphosphatase activity and to increased resistance to bacitracin. May have a preferred substrate other than undecaprenyl diphosphate in vivo.</text>
</comment>
<comment type="catalytic activity">
    <reaction>
        <text>di-trans,octa-cis-undecaprenyl diphosphate + H2O = di-trans,octa-cis-undecaprenyl phosphate + phosphate + H(+)</text>
        <dbReference type="Rhea" id="RHEA:28094"/>
        <dbReference type="ChEBI" id="CHEBI:15377"/>
        <dbReference type="ChEBI" id="CHEBI:15378"/>
        <dbReference type="ChEBI" id="CHEBI:43474"/>
        <dbReference type="ChEBI" id="CHEBI:58405"/>
        <dbReference type="ChEBI" id="CHEBI:60392"/>
        <dbReference type="EC" id="3.6.1.27"/>
    </reaction>
</comment>
<comment type="subcellular location">
    <subcellularLocation>
        <location>Cell inner membrane</location>
        <topology>Multi-pass membrane protein</topology>
    </subcellularLocation>
</comment>
<comment type="similarity">
    <text evidence="3">Belongs to the BcrC/YbjG family.</text>
</comment>
<accession>P75806</accession>
<sequence>MLENLNLSLFSLINATPDSAPWMISLAIFIAKDLITVVPLLAVVLWLWGLTAQRQLVIKIAIALAVSLFVSWTMGHLFPHDRPFVENIGYNFLHHAADDSFPSDHGTVIFTFALAFLCWHRLWSGSLLMVLAVVIAWSRVYLGVHWPLDMLGGLLAGMIGCLSAQIIWQAMGHKLYQRLQSWYRVCFALPIRKGWVRD</sequence>